<dbReference type="EC" id="4.2.3.104" evidence="3"/>
<dbReference type="EMBL" id="HQ426155">
    <property type="protein sequence ID" value="ADZ45513.1"/>
    <property type="molecule type" value="mRNA"/>
</dbReference>
<dbReference type="SMR" id="F2XF97"/>
<dbReference type="UniPathway" id="UPA00924"/>
<dbReference type="GO" id="GO:0080017">
    <property type="term" value="F:alpha-humulene synthase activity"/>
    <property type="evidence" value="ECO:0000314"/>
    <property type="project" value="UniProtKB"/>
</dbReference>
<dbReference type="GO" id="GO:0016829">
    <property type="term" value="F:lyase activity"/>
    <property type="evidence" value="ECO:0000314"/>
    <property type="project" value="UniProtKB"/>
</dbReference>
<dbReference type="GO" id="GO:0000287">
    <property type="term" value="F:magnesium ion binding"/>
    <property type="evidence" value="ECO:0007669"/>
    <property type="project" value="InterPro"/>
</dbReference>
<dbReference type="GO" id="GO:0016102">
    <property type="term" value="P:diterpenoid biosynthetic process"/>
    <property type="evidence" value="ECO:0007669"/>
    <property type="project" value="InterPro"/>
</dbReference>
<dbReference type="GO" id="GO:0010597">
    <property type="term" value="P:green leaf volatile biosynthetic process"/>
    <property type="evidence" value="ECO:0000314"/>
    <property type="project" value="UniProtKB"/>
</dbReference>
<dbReference type="GO" id="GO:0016106">
    <property type="term" value="P:sesquiterpenoid biosynthetic process"/>
    <property type="evidence" value="ECO:0000314"/>
    <property type="project" value="UniProtKB"/>
</dbReference>
<dbReference type="CDD" id="cd00684">
    <property type="entry name" value="Terpene_cyclase_plant_C1"/>
    <property type="match status" value="1"/>
</dbReference>
<dbReference type="FunFam" id="1.50.10.130:FF:000002">
    <property type="entry name" value="Ent-copalyl diphosphate synthase, chloroplastic"/>
    <property type="match status" value="1"/>
</dbReference>
<dbReference type="FunFam" id="1.10.600.10:FF:000005">
    <property type="entry name" value="Ent-kaur-16-ene synthase, chloroplastic"/>
    <property type="match status" value="1"/>
</dbReference>
<dbReference type="Gene3D" id="1.10.600.10">
    <property type="entry name" value="Farnesyl Diphosphate Synthase"/>
    <property type="match status" value="1"/>
</dbReference>
<dbReference type="Gene3D" id="1.50.10.130">
    <property type="entry name" value="Terpene synthase, N-terminal domain"/>
    <property type="match status" value="1"/>
</dbReference>
<dbReference type="InterPro" id="IPR008949">
    <property type="entry name" value="Isoprenoid_synthase_dom_sf"/>
</dbReference>
<dbReference type="InterPro" id="IPR034741">
    <property type="entry name" value="Terpene_cyclase-like_1_C"/>
</dbReference>
<dbReference type="InterPro" id="IPR044814">
    <property type="entry name" value="Terpene_cyclase_plant_C1"/>
</dbReference>
<dbReference type="InterPro" id="IPR001906">
    <property type="entry name" value="Terpene_synth_N"/>
</dbReference>
<dbReference type="InterPro" id="IPR036965">
    <property type="entry name" value="Terpene_synth_N_sf"/>
</dbReference>
<dbReference type="InterPro" id="IPR050148">
    <property type="entry name" value="Terpene_synthase-like"/>
</dbReference>
<dbReference type="InterPro" id="IPR005630">
    <property type="entry name" value="Terpene_synthase_metal-bd"/>
</dbReference>
<dbReference type="InterPro" id="IPR008930">
    <property type="entry name" value="Terpenoid_cyclase/PrenylTrfase"/>
</dbReference>
<dbReference type="PANTHER" id="PTHR31225">
    <property type="entry name" value="OS04G0344100 PROTEIN-RELATED"/>
    <property type="match status" value="1"/>
</dbReference>
<dbReference type="Pfam" id="PF01397">
    <property type="entry name" value="Terpene_synth"/>
    <property type="match status" value="1"/>
</dbReference>
<dbReference type="Pfam" id="PF03936">
    <property type="entry name" value="Terpene_synth_C"/>
    <property type="match status" value="1"/>
</dbReference>
<dbReference type="SFLD" id="SFLDS00005">
    <property type="entry name" value="Isoprenoid_Synthase_Type_I"/>
    <property type="match status" value="1"/>
</dbReference>
<dbReference type="SFLD" id="SFLDG01019">
    <property type="entry name" value="Terpene_Cyclase_Like_1_C_Termi"/>
    <property type="match status" value="1"/>
</dbReference>
<dbReference type="SFLD" id="SFLDG01014">
    <property type="entry name" value="Terpene_Cyclase_Like_1_N-term"/>
    <property type="match status" value="1"/>
</dbReference>
<dbReference type="SUPFAM" id="SSF48239">
    <property type="entry name" value="Terpenoid cyclases/Protein prenyltransferases"/>
    <property type="match status" value="1"/>
</dbReference>
<dbReference type="SUPFAM" id="SSF48576">
    <property type="entry name" value="Terpenoid synthases"/>
    <property type="match status" value="1"/>
</dbReference>
<name>AHUMS_PICGL</name>
<accession>F2XF97</accession>
<feature type="chain" id="PRO_0000454417" description="Alpha-humulene synthase">
    <location>
        <begin position="1"/>
        <end position="575"/>
    </location>
</feature>
<feature type="short sequence motif" description="DDXXD motif" evidence="1">
    <location>
        <begin position="325"/>
        <end position="329"/>
    </location>
</feature>
<feature type="binding site" evidence="2">
    <location>
        <position position="325"/>
    </location>
    <ligand>
        <name>Mg(2+)</name>
        <dbReference type="ChEBI" id="CHEBI:18420"/>
        <label>1</label>
    </ligand>
</feature>
<feature type="binding site" evidence="2">
    <location>
        <position position="325"/>
    </location>
    <ligand>
        <name>Mg(2+)</name>
        <dbReference type="ChEBI" id="CHEBI:18420"/>
        <label>2</label>
    </ligand>
</feature>
<feature type="binding site" evidence="2">
    <location>
        <position position="329"/>
    </location>
    <ligand>
        <name>Mg(2+)</name>
        <dbReference type="ChEBI" id="CHEBI:18420"/>
        <label>1</label>
    </ligand>
</feature>
<feature type="binding site" evidence="2">
    <location>
        <position position="329"/>
    </location>
    <ligand>
        <name>Mg(2+)</name>
        <dbReference type="ChEBI" id="CHEBI:18420"/>
        <label>2</label>
    </ligand>
</feature>
<feature type="binding site" evidence="2">
    <location>
        <position position="469"/>
    </location>
    <ligand>
        <name>Mg(2+)</name>
        <dbReference type="ChEBI" id="CHEBI:18420"/>
        <label>3</label>
    </ligand>
</feature>
<feature type="binding site" evidence="2">
    <location>
        <position position="477"/>
    </location>
    <ligand>
        <name>Mg(2+)</name>
        <dbReference type="ChEBI" id="CHEBI:18420"/>
        <label>3</label>
    </ligand>
</feature>
<protein>
    <recommendedName>
        <fullName evidence="4">Alpha-humulene synthase</fullName>
        <ecNumber evidence="3">4.2.3.104</ecNumber>
    </recommendedName>
    <alternativeName>
        <fullName evidence="4">Terpene synthase TPS-Hum</fullName>
        <shortName evidence="4">PgTPS-Hum</shortName>
    </alternativeName>
</protein>
<sequence length="575" mass="66334">MAQISESAAIPRRTANHHGNVWDDDLILSLDSPYGAPAYYERLAKLIEEMKHLLLREMEDSNHDLIRRLQIVDTLECLGIDRHFQHEIKTAALHYVYRCWNEKGIGMGSSDSGSKDLDATALGLRALRLHRYNVSSGVLENFQDENGKFFCNLTGDKRVRSMLSLLRASEISFPGEKVMQEAKAFTREYLTQVLAGSGDVTDVDQSLLREVKYALEFPWYCSAPRWEAKSFIEIYGQNQSWLKSNINQEVLELAKLDFSILQCIHQKEIQCITRWWRDSEIAQLNFYRRRHVELYFWAVTCIFEPEFSPSRIAFAKITTVGAVLDDLYDTHGTLDELKTITEAVRRWDLSLIDDLPNNIKIACQFFFNTANELAVEVVKKQGRDMTALLKATWQRYVESYLQEAEWIETRHVPSFNEYIKNALVSSGMCIVNLIPLLLLGQLLANNIVEQILSPSKIQELSELTIRLIDDIRDFEDEKERGEIASIVECYMKDNPDSTLENALNHIKGILHVSLEELNWEFMKDDSVPLCCKKFTFNIVRGLQFLYKYGDGISISNKEVKDQIFKILVDQIPIED</sequence>
<comment type="function">
    <text evidence="3">Terpene synthase (TPS) involved in the biosynthesis of sesquiterpene natural products included in conifer oleoresin secretions and volatile emissions; these compounds contribute to biotic and abiotic stress defense against herbivores and pathogens (PubMed:21385377). Catalyzes the conversion of (2E,6E)-farnesyl diphosphate (FPP) to (1E,4E,8E)-alpha-humulene (PubMed:21385377).</text>
</comment>
<comment type="catalytic activity">
    <reaction evidence="3">
        <text>(2E,6E)-farnesyl diphosphate = alpha-humulene + diphosphate</text>
        <dbReference type="Rhea" id="RHEA:31895"/>
        <dbReference type="ChEBI" id="CHEBI:5768"/>
        <dbReference type="ChEBI" id="CHEBI:33019"/>
        <dbReference type="ChEBI" id="CHEBI:175763"/>
        <dbReference type="EC" id="4.2.3.104"/>
    </reaction>
</comment>
<comment type="cofactor">
    <cofactor evidence="1">
        <name>Mg(2+)</name>
        <dbReference type="ChEBI" id="CHEBI:18420"/>
    </cofactor>
    <cofactor evidence="1">
        <name>Mn(2+)</name>
        <dbReference type="ChEBI" id="CHEBI:29035"/>
    </cofactor>
    <text evidence="1">Binds 3 Mg(2+) or Mn(2+) ions per subunit.</text>
</comment>
<comment type="pathway">
    <text evidence="3">Sesquiterpene biosynthesis.</text>
</comment>
<comment type="pathway">
    <text evidence="3">Terpene metabolism; oleoresin biosynthesis.</text>
</comment>
<comment type="domain">
    <text evidence="1">The Asp-Asp-Xaa-Xaa-Asp/Glu (DDXXD/E) motif is important for the catalytic activity, presumably through binding to Mg(2+).</text>
</comment>
<comment type="similarity">
    <text evidence="5">Belongs to the terpene synthase family. Tpsa subfamily.</text>
</comment>
<keyword id="KW-0456">Lyase</keyword>
<keyword id="KW-0460">Magnesium</keyword>
<keyword id="KW-0479">Metal-binding</keyword>
<gene>
    <name evidence="4" type="primary">TPS-Hum</name>
</gene>
<reference key="1">
    <citation type="journal article" date="2011" name="BMC Plant Biol.">
        <title>Transcriptome mining, functional characterization, and phylogeny of a large terpene synthase gene family in spruce (Picea spp.).</title>
        <authorList>
            <person name="Keeling C.I."/>
            <person name="Weisshaar S."/>
            <person name="Ralph S.G."/>
            <person name="Jancsik S."/>
            <person name="Hamberger B."/>
            <person name="Dullat H.K."/>
            <person name="Bohlmann J."/>
        </authorList>
    </citation>
    <scope>NUCLEOTIDE SEQUENCE [MRNA]</scope>
    <scope>CATALYTIC ACTIVITY</scope>
    <scope>FUNCTION</scope>
    <scope>PATHWAY</scope>
    <scope>GENE FAMILY</scope>
    <source>
        <strain>cv. PG29</strain>
    </source>
</reference>
<evidence type="ECO:0000250" key="1">
    <source>
        <dbReference type="UniProtKB" id="A0A1C9J6A7"/>
    </source>
</evidence>
<evidence type="ECO:0000250" key="2">
    <source>
        <dbReference type="UniProtKB" id="Q40577"/>
    </source>
</evidence>
<evidence type="ECO:0000269" key="3">
    <source>
    </source>
</evidence>
<evidence type="ECO:0000303" key="4">
    <source>
    </source>
</evidence>
<evidence type="ECO:0000305" key="5"/>
<proteinExistence type="evidence at protein level"/>
<organism>
    <name type="scientific">Picea glauca</name>
    <name type="common">White spruce</name>
    <name type="synonym">Pinus glauca</name>
    <dbReference type="NCBI Taxonomy" id="3330"/>
    <lineage>
        <taxon>Eukaryota</taxon>
        <taxon>Viridiplantae</taxon>
        <taxon>Streptophyta</taxon>
        <taxon>Embryophyta</taxon>
        <taxon>Tracheophyta</taxon>
        <taxon>Spermatophyta</taxon>
        <taxon>Pinopsida</taxon>
        <taxon>Pinidae</taxon>
        <taxon>Conifers I</taxon>
        <taxon>Pinales</taxon>
        <taxon>Pinaceae</taxon>
        <taxon>Picea</taxon>
    </lineage>
</organism>